<proteinExistence type="inferred from homology"/>
<protein>
    <recommendedName>
        <fullName evidence="1">Large ribosomal subunit protein uL1</fullName>
    </recommendedName>
    <alternativeName>
        <fullName evidence="2">50S ribosomal protein L1</fullName>
    </alternativeName>
</protein>
<evidence type="ECO:0000255" key="1">
    <source>
        <dbReference type="HAMAP-Rule" id="MF_01318"/>
    </source>
</evidence>
<evidence type="ECO:0000305" key="2"/>
<reference key="1">
    <citation type="submission" date="2007-03" db="EMBL/GenBank/DDBJ databases">
        <title>Complete sequence of chromosome 1 of Burkholderia vietnamiensis G4.</title>
        <authorList>
            <consortium name="US DOE Joint Genome Institute"/>
            <person name="Copeland A."/>
            <person name="Lucas S."/>
            <person name="Lapidus A."/>
            <person name="Barry K."/>
            <person name="Detter J.C."/>
            <person name="Glavina del Rio T."/>
            <person name="Hammon N."/>
            <person name="Israni S."/>
            <person name="Dalin E."/>
            <person name="Tice H."/>
            <person name="Pitluck S."/>
            <person name="Chain P."/>
            <person name="Malfatti S."/>
            <person name="Shin M."/>
            <person name="Vergez L."/>
            <person name="Schmutz J."/>
            <person name="Larimer F."/>
            <person name="Land M."/>
            <person name="Hauser L."/>
            <person name="Kyrpides N."/>
            <person name="Tiedje J."/>
            <person name="Richardson P."/>
        </authorList>
    </citation>
    <scope>NUCLEOTIDE SEQUENCE [LARGE SCALE GENOMIC DNA]</scope>
    <source>
        <strain>G4 / LMG 22486</strain>
    </source>
</reference>
<feature type="chain" id="PRO_0000307980" description="Large ribosomal subunit protein uL1">
    <location>
        <begin position="1"/>
        <end position="232"/>
    </location>
</feature>
<accession>A4JAM9</accession>
<gene>
    <name evidence="1" type="primary">rplA</name>
    <name type="ordered locus">Bcep1808_0319</name>
</gene>
<sequence>MAKISKRRQAFEAKVDRQKLYAIEDALALVKECASAKFNESIDVAVQLGIDAKKSDQVVRGSVVLPAGTGKSVRVAVFAQGEKAEQARAAGAEIVGMEDLAEQIKAGQMDFDIVIASPDTMRIVGTLGQILGPRGLMPNPKVGTVTPDVATAVKNAKAGQVQFRVDKAGIIHATIGRASFEATALRSNLSALIEALQKAKPATSKGVYLRKIALSSTMGVGVRVDQATLAAQ</sequence>
<comment type="function">
    <text evidence="1">Binds directly to 23S rRNA. The L1 stalk is quite mobile in the ribosome, and is involved in E site tRNA release.</text>
</comment>
<comment type="function">
    <text evidence="1">Protein L1 is also a translational repressor protein, it controls the translation of the L11 operon by binding to its mRNA.</text>
</comment>
<comment type="subunit">
    <text evidence="1">Part of the 50S ribosomal subunit.</text>
</comment>
<comment type="similarity">
    <text evidence="1">Belongs to the universal ribosomal protein uL1 family.</text>
</comment>
<name>RL1_BURVG</name>
<keyword id="KW-0678">Repressor</keyword>
<keyword id="KW-0687">Ribonucleoprotein</keyword>
<keyword id="KW-0689">Ribosomal protein</keyword>
<keyword id="KW-0694">RNA-binding</keyword>
<keyword id="KW-0699">rRNA-binding</keyword>
<keyword id="KW-0810">Translation regulation</keyword>
<keyword id="KW-0820">tRNA-binding</keyword>
<organism>
    <name type="scientific">Burkholderia vietnamiensis (strain G4 / LMG 22486)</name>
    <name type="common">Burkholderia cepacia (strain R1808)</name>
    <dbReference type="NCBI Taxonomy" id="269482"/>
    <lineage>
        <taxon>Bacteria</taxon>
        <taxon>Pseudomonadati</taxon>
        <taxon>Pseudomonadota</taxon>
        <taxon>Betaproteobacteria</taxon>
        <taxon>Burkholderiales</taxon>
        <taxon>Burkholderiaceae</taxon>
        <taxon>Burkholderia</taxon>
        <taxon>Burkholderia cepacia complex</taxon>
    </lineage>
</organism>
<dbReference type="EMBL" id="CP000614">
    <property type="protein sequence ID" value="ABO53332.1"/>
    <property type="molecule type" value="Genomic_DNA"/>
</dbReference>
<dbReference type="SMR" id="A4JAM9"/>
<dbReference type="KEGG" id="bvi:Bcep1808_0319"/>
<dbReference type="eggNOG" id="COG0081">
    <property type="taxonomic scope" value="Bacteria"/>
</dbReference>
<dbReference type="HOGENOM" id="CLU_062853_0_0_4"/>
<dbReference type="Proteomes" id="UP000002287">
    <property type="component" value="Chromosome 1"/>
</dbReference>
<dbReference type="GO" id="GO:0022625">
    <property type="term" value="C:cytosolic large ribosomal subunit"/>
    <property type="evidence" value="ECO:0007669"/>
    <property type="project" value="TreeGrafter"/>
</dbReference>
<dbReference type="GO" id="GO:0019843">
    <property type="term" value="F:rRNA binding"/>
    <property type="evidence" value="ECO:0007669"/>
    <property type="project" value="UniProtKB-UniRule"/>
</dbReference>
<dbReference type="GO" id="GO:0003735">
    <property type="term" value="F:structural constituent of ribosome"/>
    <property type="evidence" value="ECO:0007669"/>
    <property type="project" value="InterPro"/>
</dbReference>
<dbReference type="GO" id="GO:0000049">
    <property type="term" value="F:tRNA binding"/>
    <property type="evidence" value="ECO:0007669"/>
    <property type="project" value="UniProtKB-KW"/>
</dbReference>
<dbReference type="GO" id="GO:0006417">
    <property type="term" value="P:regulation of translation"/>
    <property type="evidence" value="ECO:0007669"/>
    <property type="project" value="UniProtKB-KW"/>
</dbReference>
<dbReference type="GO" id="GO:0006412">
    <property type="term" value="P:translation"/>
    <property type="evidence" value="ECO:0007669"/>
    <property type="project" value="UniProtKB-UniRule"/>
</dbReference>
<dbReference type="CDD" id="cd00403">
    <property type="entry name" value="Ribosomal_L1"/>
    <property type="match status" value="1"/>
</dbReference>
<dbReference type="FunFam" id="3.40.50.790:FF:000001">
    <property type="entry name" value="50S ribosomal protein L1"/>
    <property type="match status" value="1"/>
</dbReference>
<dbReference type="Gene3D" id="3.30.190.20">
    <property type="match status" value="1"/>
</dbReference>
<dbReference type="Gene3D" id="3.40.50.790">
    <property type="match status" value="1"/>
</dbReference>
<dbReference type="HAMAP" id="MF_01318_B">
    <property type="entry name" value="Ribosomal_uL1_B"/>
    <property type="match status" value="1"/>
</dbReference>
<dbReference type="InterPro" id="IPR005878">
    <property type="entry name" value="Ribosom_uL1_bac-type"/>
</dbReference>
<dbReference type="InterPro" id="IPR002143">
    <property type="entry name" value="Ribosomal_uL1"/>
</dbReference>
<dbReference type="InterPro" id="IPR023674">
    <property type="entry name" value="Ribosomal_uL1-like"/>
</dbReference>
<dbReference type="InterPro" id="IPR028364">
    <property type="entry name" value="Ribosomal_uL1/biogenesis"/>
</dbReference>
<dbReference type="InterPro" id="IPR016095">
    <property type="entry name" value="Ribosomal_uL1_3-a/b-sand"/>
</dbReference>
<dbReference type="InterPro" id="IPR023673">
    <property type="entry name" value="Ribosomal_uL1_CS"/>
</dbReference>
<dbReference type="NCBIfam" id="TIGR01169">
    <property type="entry name" value="rplA_bact"/>
    <property type="match status" value="1"/>
</dbReference>
<dbReference type="PANTHER" id="PTHR36427">
    <property type="entry name" value="54S RIBOSOMAL PROTEIN L1, MITOCHONDRIAL"/>
    <property type="match status" value="1"/>
</dbReference>
<dbReference type="PANTHER" id="PTHR36427:SF3">
    <property type="entry name" value="LARGE RIBOSOMAL SUBUNIT PROTEIN UL1M"/>
    <property type="match status" value="1"/>
</dbReference>
<dbReference type="Pfam" id="PF00687">
    <property type="entry name" value="Ribosomal_L1"/>
    <property type="match status" value="1"/>
</dbReference>
<dbReference type="PIRSF" id="PIRSF002155">
    <property type="entry name" value="Ribosomal_L1"/>
    <property type="match status" value="1"/>
</dbReference>
<dbReference type="SUPFAM" id="SSF56808">
    <property type="entry name" value="Ribosomal protein L1"/>
    <property type="match status" value="1"/>
</dbReference>
<dbReference type="PROSITE" id="PS01199">
    <property type="entry name" value="RIBOSOMAL_L1"/>
    <property type="match status" value="1"/>
</dbReference>